<evidence type="ECO:0000255" key="1">
    <source>
        <dbReference type="HAMAP-Rule" id="MF_01178"/>
    </source>
</evidence>
<keyword id="KW-0010">Activator</keyword>
<keyword id="KW-0175">Coiled coil</keyword>
<keyword id="KW-0963">Cytoplasm</keyword>
<keyword id="KW-0804">Transcription</keyword>
<keyword id="KW-0805">Transcription regulation</keyword>
<name>CRL_ECODH</name>
<reference key="1">
    <citation type="journal article" date="2008" name="J. Bacteriol.">
        <title>The complete genome sequence of Escherichia coli DH10B: insights into the biology of a laboratory workhorse.</title>
        <authorList>
            <person name="Durfee T."/>
            <person name="Nelson R."/>
            <person name="Baldwin S."/>
            <person name="Plunkett G. III"/>
            <person name="Burland V."/>
            <person name="Mau B."/>
            <person name="Petrosino J.F."/>
            <person name="Qin X."/>
            <person name="Muzny D.M."/>
            <person name="Ayele M."/>
            <person name="Gibbs R.A."/>
            <person name="Csorgo B."/>
            <person name="Posfai G."/>
            <person name="Weinstock G.M."/>
            <person name="Blattner F.R."/>
        </authorList>
    </citation>
    <scope>NUCLEOTIDE SEQUENCE [LARGE SCALE GENOMIC DNA]</scope>
    <source>
        <strain>K12 / DH10B</strain>
    </source>
</reference>
<accession>B1XDY3</accession>
<gene>
    <name evidence="1" type="primary">crl</name>
    <name type="ordered locus">ECDH10B_0222</name>
</gene>
<dbReference type="EMBL" id="CP000948">
    <property type="protein sequence ID" value="ACB01407.1"/>
    <property type="molecule type" value="Genomic_DNA"/>
</dbReference>
<dbReference type="RefSeq" id="WP_000174689.1">
    <property type="nucleotide sequence ID" value="NC_010473.1"/>
</dbReference>
<dbReference type="SMR" id="B1XDY3"/>
<dbReference type="KEGG" id="ecd:ECDH10B_0222"/>
<dbReference type="HOGENOM" id="CLU_136773_0_0_6"/>
<dbReference type="GO" id="GO:0005737">
    <property type="term" value="C:cytoplasm"/>
    <property type="evidence" value="ECO:0007669"/>
    <property type="project" value="UniProtKB-SubCell"/>
</dbReference>
<dbReference type="GO" id="GO:0045893">
    <property type="term" value="P:positive regulation of DNA-templated transcription"/>
    <property type="evidence" value="ECO:0007669"/>
    <property type="project" value="UniProtKB-UniRule"/>
</dbReference>
<dbReference type="FunFam" id="3.30.310.230:FF:000001">
    <property type="entry name" value="Sigma factor-binding protein Crl"/>
    <property type="match status" value="1"/>
</dbReference>
<dbReference type="Gene3D" id="3.30.310.230">
    <property type="entry name" value="Sigma factor-binding protein Crl monomer"/>
    <property type="match status" value="1"/>
</dbReference>
<dbReference type="HAMAP" id="MF_01178">
    <property type="entry name" value="Crl"/>
    <property type="match status" value="1"/>
</dbReference>
<dbReference type="InterPro" id="IPR009986">
    <property type="entry name" value="Tscrpt_reg_Crl"/>
</dbReference>
<dbReference type="InterPro" id="IPR038208">
    <property type="entry name" value="Tscrpt_reg_Crl_sf"/>
</dbReference>
<dbReference type="NCBIfam" id="NF008217">
    <property type="entry name" value="PRK10984.1"/>
    <property type="match status" value="1"/>
</dbReference>
<dbReference type="Pfam" id="PF07417">
    <property type="entry name" value="Crl"/>
    <property type="match status" value="1"/>
</dbReference>
<feature type="chain" id="PRO_1000138138" description="Sigma factor-binding protein Crl">
    <location>
        <begin position="1"/>
        <end position="133"/>
    </location>
</feature>
<feature type="region of interest" description="Essential for activity" evidence="1">
    <location>
        <begin position="99"/>
        <end position="122"/>
    </location>
</feature>
<feature type="coiled-coil region" evidence="1">
    <location>
        <begin position="90"/>
        <end position="116"/>
    </location>
</feature>
<protein>
    <recommendedName>
        <fullName evidence="1">Sigma factor-binding protein Crl</fullName>
    </recommendedName>
</protein>
<organism>
    <name type="scientific">Escherichia coli (strain K12 / DH10B)</name>
    <dbReference type="NCBI Taxonomy" id="316385"/>
    <lineage>
        <taxon>Bacteria</taxon>
        <taxon>Pseudomonadati</taxon>
        <taxon>Pseudomonadota</taxon>
        <taxon>Gammaproteobacteria</taxon>
        <taxon>Enterobacterales</taxon>
        <taxon>Enterobacteriaceae</taxon>
        <taxon>Escherichia</taxon>
    </lineage>
</organism>
<comment type="function">
    <text evidence="1">Binds to the sigma-S subunit of RNA polymerase, activating expression of sigma-S-regulated genes. Stimulates RNA polymerase holoenzyme formation and may bind to several other sigma factors, such as sigma-70 and sigma-32.</text>
</comment>
<comment type="subcellular location">
    <subcellularLocation>
        <location evidence="1">Cytoplasm</location>
    </subcellularLocation>
</comment>
<comment type="similarity">
    <text evidence="1">Belongs to the Crl family.</text>
</comment>
<sequence length="133" mass="15655">MTLPSGHPKSRLIKKFTALGPYIREGKCKDNRFFFDCLAVCVNVKPAPEVREFWGWWMELEAQESRFTYSYQFGLFDKAGDWKSVPVKDTEVVERLEHTLREFHEKLRELLTTLNLKLEPADDFRDEPVKLTA</sequence>
<proteinExistence type="inferred from homology"/>